<sequence length="331" mass="35768">MASLKNKHFMIGLSLTFIVALFSFLAAKLPILDKVGALTIAILIAILYRHFRGYPEQYSSGITFSSKYLLRFAIILYGLKLNIFDIIGQGSKLLAIDVGVVIFSIVMMLFVNKLLHGDKNIALLLGVGTGVCGAAAIAAVAPIFKSREKDTAISIGIIALIGTIFSLIYTAIYAIFSMTTNVYGAWSGVSLHEIAHVVLAGGFGGSDALKIALLGKLGRVFLLIPLTIVLILIMRFRSSESSSKGRISIPYFLIGFVIMALVNTYVTIPSVLLNILNTISTICLLMAMVALGLNVAFKDLKNRALKPLMTIIITSICLSSLAFIVVHWLYS</sequence>
<gene>
    <name type="ordered locus">SA0329</name>
</gene>
<feature type="chain" id="PRO_0000157453" description="UPF0324 membrane protein SA0329">
    <location>
        <begin position="1"/>
        <end position="331"/>
    </location>
</feature>
<feature type="transmembrane region" description="Helical" evidence="1">
    <location>
        <begin position="9"/>
        <end position="26"/>
    </location>
</feature>
<feature type="transmembrane region" description="Helical" evidence="1">
    <location>
        <begin position="31"/>
        <end position="48"/>
    </location>
</feature>
<feature type="transmembrane region" description="Helical" evidence="1">
    <location>
        <begin position="69"/>
        <end position="88"/>
    </location>
</feature>
<feature type="transmembrane region" description="Helical" evidence="1">
    <location>
        <begin position="93"/>
        <end position="115"/>
    </location>
</feature>
<feature type="transmembrane region" description="Helical" evidence="1">
    <location>
        <begin position="122"/>
        <end position="144"/>
    </location>
</feature>
<feature type="transmembrane region" description="Helical" evidence="1">
    <location>
        <begin position="154"/>
        <end position="176"/>
    </location>
</feature>
<feature type="transmembrane region" description="Helical" evidence="1">
    <location>
        <begin position="183"/>
        <end position="202"/>
    </location>
</feature>
<feature type="transmembrane region" description="Helical" evidence="1">
    <location>
        <begin position="217"/>
        <end position="234"/>
    </location>
</feature>
<feature type="transmembrane region" description="Helical" evidence="1">
    <location>
        <begin position="247"/>
        <end position="269"/>
    </location>
</feature>
<feature type="transmembrane region" description="Helical" evidence="1">
    <location>
        <begin position="273"/>
        <end position="295"/>
    </location>
</feature>
<feature type="transmembrane region" description="Helical" evidence="1">
    <location>
        <begin position="308"/>
        <end position="330"/>
    </location>
</feature>
<keyword id="KW-1003">Cell membrane</keyword>
<keyword id="KW-0472">Membrane</keyword>
<keyword id="KW-0812">Transmembrane</keyword>
<keyword id="KW-1133">Transmembrane helix</keyword>
<proteinExistence type="inferred from homology"/>
<reference key="1">
    <citation type="journal article" date="2001" name="Lancet">
        <title>Whole genome sequencing of meticillin-resistant Staphylococcus aureus.</title>
        <authorList>
            <person name="Kuroda M."/>
            <person name="Ohta T."/>
            <person name="Uchiyama I."/>
            <person name="Baba T."/>
            <person name="Yuzawa H."/>
            <person name="Kobayashi I."/>
            <person name="Cui L."/>
            <person name="Oguchi A."/>
            <person name="Aoki K."/>
            <person name="Nagai Y."/>
            <person name="Lian J.-Q."/>
            <person name="Ito T."/>
            <person name="Kanamori M."/>
            <person name="Matsumaru H."/>
            <person name="Maruyama A."/>
            <person name="Murakami H."/>
            <person name="Hosoyama A."/>
            <person name="Mizutani-Ui Y."/>
            <person name="Takahashi N.K."/>
            <person name="Sawano T."/>
            <person name="Inoue R."/>
            <person name="Kaito C."/>
            <person name="Sekimizu K."/>
            <person name="Hirakawa H."/>
            <person name="Kuhara S."/>
            <person name="Goto S."/>
            <person name="Yabuzaki J."/>
            <person name="Kanehisa M."/>
            <person name="Yamashita A."/>
            <person name="Oshima K."/>
            <person name="Furuya K."/>
            <person name="Yoshino C."/>
            <person name="Shiba T."/>
            <person name="Hattori M."/>
            <person name="Ogasawara N."/>
            <person name="Hayashi H."/>
            <person name="Hiramatsu K."/>
        </authorList>
    </citation>
    <scope>NUCLEOTIDE SEQUENCE [LARGE SCALE GENOMIC DNA]</scope>
    <source>
        <strain>N315</strain>
    </source>
</reference>
<organism>
    <name type="scientific">Staphylococcus aureus (strain N315)</name>
    <dbReference type="NCBI Taxonomy" id="158879"/>
    <lineage>
        <taxon>Bacteria</taxon>
        <taxon>Bacillati</taxon>
        <taxon>Bacillota</taxon>
        <taxon>Bacilli</taxon>
        <taxon>Bacillales</taxon>
        <taxon>Staphylococcaceae</taxon>
        <taxon>Staphylococcus</taxon>
    </lineage>
</organism>
<comment type="subcellular location">
    <subcellularLocation>
        <location evidence="2">Cell membrane</location>
        <topology evidence="2">Multi-pass membrane protein</topology>
    </subcellularLocation>
</comment>
<comment type="similarity">
    <text evidence="2">Belongs to the UPF0324 family.</text>
</comment>
<name>Y329_STAAN</name>
<evidence type="ECO:0000255" key="1"/>
<evidence type="ECO:0000305" key="2"/>
<protein>
    <recommendedName>
        <fullName>UPF0324 membrane protein SA0329</fullName>
    </recommendedName>
</protein>
<accession>Q7A7M5</accession>
<dbReference type="EMBL" id="BA000018">
    <property type="protein sequence ID" value="BAB41553.1"/>
    <property type="molecule type" value="Genomic_DNA"/>
</dbReference>
<dbReference type="PIR" id="F89799">
    <property type="entry name" value="F89799"/>
</dbReference>
<dbReference type="RefSeq" id="WP_000157630.1">
    <property type="nucleotide sequence ID" value="NC_002745.2"/>
</dbReference>
<dbReference type="EnsemblBacteria" id="BAB41553">
    <property type="protein sequence ID" value="BAB41553"/>
    <property type="gene ID" value="BAB41553"/>
</dbReference>
<dbReference type="KEGG" id="sau:SA0329"/>
<dbReference type="HOGENOM" id="CLU_033541_0_1_9"/>
<dbReference type="GO" id="GO:0005886">
    <property type="term" value="C:plasma membrane"/>
    <property type="evidence" value="ECO:0007669"/>
    <property type="project" value="UniProtKB-SubCell"/>
</dbReference>
<dbReference type="InterPro" id="IPR018383">
    <property type="entry name" value="UPF0324_pro"/>
</dbReference>
<dbReference type="PANTHER" id="PTHR30106">
    <property type="entry name" value="INNER MEMBRANE PROTEIN YEIH-RELATED"/>
    <property type="match status" value="1"/>
</dbReference>
<dbReference type="PANTHER" id="PTHR30106:SF2">
    <property type="entry name" value="UPF0324 INNER MEMBRANE PROTEIN YEIH"/>
    <property type="match status" value="1"/>
</dbReference>
<dbReference type="Pfam" id="PF03601">
    <property type="entry name" value="Cons_hypoth698"/>
    <property type="match status" value="1"/>
</dbReference>